<organism>
    <name type="scientific">Dictyostelium discoideum</name>
    <name type="common">Social amoeba</name>
    <dbReference type="NCBI Taxonomy" id="44689"/>
    <lineage>
        <taxon>Eukaryota</taxon>
        <taxon>Amoebozoa</taxon>
        <taxon>Evosea</taxon>
        <taxon>Eumycetozoa</taxon>
        <taxon>Dictyostelia</taxon>
        <taxon>Dictyosteliales</taxon>
        <taxon>Dictyosteliaceae</taxon>
        <taxon>Dictyostelium</taxon>
    </lineage>
</organism>
<feature type="chain" id="PRO_0000327536" description="Acyl-lipid (8-3)-desaturase B">
    <location>
        <begin position="1"/>
        <end position="467"/>
    </location>
</feature>
<feature type="transmembrane region" description="Helical" evidence="2">
    <location>
        <begin position="123"/>
        <end position="143"/>
    </location>
</feature>
<feature type="transmembrane region" description="Helical" evidence="2">
    <location>
        <begin position="152"/>
        <end position="172"/>
    </location>
</feature>
<feature type="transmembrane region" description="Helical" evidence="2">
    <location>
        <begin position="187"/>
        <end position="207"/>
    </location>
</feature>
<feature type="transmembrane region" description="Helical" evidence="2">
    <location>
        <begin position="293"/>
        <end position="313"/>
    </location>
</feature>
<feature type="transmembrane region" description="Helical" evidence="2">
    <location>
        <begin position="317"/>
        <end position="337"/>
    </location>
</feature>
<feature type="domain" description="Cytochrome b5 heme-binding" evidence="3">
    <location>
        <begin position="12"/>
        <end position="89"/>
    </location>
</feature>
<feature type="short sequence motif" description="Histidine box-1">
    <location>
        <begin position="175"/>
        <end position="179"/>
    </location>
</feature>
<feature type="short sequence motif" description="Histidine box-2">
    <location>
        <begin position="211"/>
        <end position="216"/>
    </location>
</feature>
<feature type="short sequence motif" description="Histidine box-3">
    <location>
        <begin position="400"/>
        <end position="404"/>
    </location>
</feature>
<feature type="binding site" description="axial binding residue" evidence="3">
    <location>
        <position position="47"/>
    </location>
    <ligand>
        <name>heme</name>
        <dbReference type="ChEBI" id="CHEBI:30413"/>
    </ligand>
    <ligandPart>
        <name>Fe</name>
        <dbReference type="ChEBI" id="CHEBI:18248"/>
    </ligandPart>
</feature>
<feature type="binding site" description="axial binding residue" evidence="3">
    <location>
        <position position="70"/>
    </location>
    <ligand>
        <name>heme</name>
        <dbReference type="ChEBI" id="CHEBI:30413"/>
    </ligand>
    <ligandPart>
        <name>Fe</name>
        <dbReference type="ChEBI" id="CHEBI:18248"/>
    </ligandPart>
</feature>
<accession>O96099</accession>
<accession>Q54SX8</accession>
<protein>
    <recommendedName>
        <fullName>Acyl-lipid (8-3)-desaturase B</fullName>
        <ecNumber evidence="7">1.14.19.30</ecNumber>
    </recommendedName>
    <alternativeName>
        <fullName evidence="6">Delta(5) fatty acid desaturase B</fullName>
        <shortName evidence="6">Delta-5 fatty acid desaturase B</shortName>
    </alternativeName>
</protein>
<gene>
    <name type="primary">fadB</name>
    <name type="synonym">des5-2</name>
    <name type="ORF">DDB_G0282147</name>
</gene>
<keyword id="KW-0249">Electron transport</keyword>
<keyword id="KW-0275">Fatty acid biosynthesis</keyword>
<keyword id="KW-0276">Fatty acid metabolism</keyword>
<keyword id="KW-0349">Heme</keyword>
<keyword id="KW-0408">Iron</keyword>
<keyword id="KW-0444">Lipid biosynthesis</keyword>
<keyword id="KW-0443">Lipid metabolism</keyword>
<keyword id="KW-0472">Membrane</keyword>
<keyword id="KW-0479">Metal-binding</keyword>
<keyword id="KW-0560">Oxidoreductase</keyword>
<keyword id="KW-1185">Reference proteome</keyword>
<keyword id="KW-0812">Transmembrane</keyword>
<keyword id="KW-1133">Transmembrane helix</keyword>
<keyword id="KW-0813">Transport</keyword>
<comment type="function">
    <text evidence="4">Fatty acid desaturase that introduces a cis double bond at the 5-position in 18-carbon polyunsaturated fatty acids.</text>
</comment>
<comment type="catalytic activity">
    <reaction evidence="7">
        <text>an (8Z,11Z,14Z)-icosatrienoyl-containing glycerolipid + 2 Fe(II)-[cytochrome b5] + O2 + 2 H(+) = (5Z,8Z,11Z,14Z)-eicosatetraenoyl-containing glycerolipid + 2 Fe(III)-[cytochrome b5] + 2 H2O</text>
        <dbReference type="Rhea" id="RHEA:46260"/>
        <dbReference type="Rhea" id="RHEA-COMP:10438"/>
        <dbReference type="Rhea" id="RHEA-COMP:10439"/>
        <dbReference type="ChEBI" id="CHEBI:15377"/>
        <dbReference type="ChEBI" id="CHEBI:15378"/>
        <dbReference type="ChEBI" id="CHEBI:15379"/>
        <dbReference type="ChEBI" id="CHEBI:29033"/>
        <dbReference type="ChEBI" id="CHEBI:29034"/>
        <dbReference type="ChEBI" id="CHEBI:90076"/>
        <dbReference type="ChEBI" id="CHEBI:90077"/>
        <dbReference type="EC" id="1.14.19.30"/>
    </reaction>
</comment>
<comment type="catalytic activity">
    <reaction evidence="7">
        <text>an (8Z,11Z,14Z,17Z)-eicosatetraenoyl-containing glycerolipid + 2 Fe(II)-[cytochrome b5] + O2 + 2 H(+) = a (5Z,8Z,11Z,14Z,17Z)-eicosapentaenoyl-containing glycerolipid + 2 Fe(III)-[cytochrome b5] + 2 H2O</text>
        <dbReference type="Rhea" id="RHEA:46264"/>
        <dbReference type="Rhea" id="RHEA-COMP:10438"/>
        <dbReference type="Rhea" id="RHEA-COMP:10439"/>
        <dbReference type="ChEBI" id="CHEBI:15377"/>
        <dbReference type="ChEBI" id="CHEBI:15378"/>
        <dbReference type="ChEBI" id="CHEBI:15379"/>
        <dbReference type="ChEBI" id="CHEBI:29033"/>
        <dbReference type="ChEBI" id="CHEBI:29034"/>
        <dbReference type="ChEBI" id="CHEBI:90082"/>
        <dbReference type="ChEBI" id="CHEBI:90083"/>
        <dbReference type="EC" id="1.14.19.30"/>
    </reaction>
</comment>
<comment type="cofactor">
    <cofactor evidence="1">
        <name>Fe(2+)</name>
        <dbReference type="ChEBI" id="CHEBI:29033"/>
    </cofactor>
</comment>
<comment type="subcellular location">
    <subcellularLocation>
        <location evidence="7">Membrane</location>
        <topology evidence="7">Multi-pass membrane protein</topology>
    </subcellularLocation>
</comment>
<comment type="domain">
    <text evidence="7">The cytochrome b5 heme-binding domain acts as the direct electron donor to the active site of the desaturase, and does not require an external cytochrome.</text>
</comment>
<comment type="disruption phenotype">
    <text evidence="5">Mutants show no significant alteration in fatty acid composition or in phenotype.</text>
</comment>
<comment type="similarity">
    <text evidence="7">Belongs to the fatty acid desaturase type 1 family.</text>
</comment>
<reference key="1">
    <citation type="journal article" date="2000" name="Eur. J. Biochem.">
        <title>A second functional Delta5 fatty acid desaturase in the cellular slime mould Dictyostelium discoideum.</title>
        <authorList>
            <person name="Saito T."/>
            <person name="Morio T."/>
            <person name="Ochiai H."/>
        </authorList>
    </citation>
    <scope>NUCLEOTIDE SEQUENCE [MRNA]</scope>
    <scope>FUNCTION AS DESATURASE</scope>
    <source>
        <strain>AX2</strain>
    </source>
</reference>
<reference key="2">
    <citation type="journal article" date="2005" name="Nature">
        <title>The genome of the social amoeba Dictyostelium discoideum.</title>
        <authorList>
            <person name="Eichinger L."/>
            <person name="Pachebat J.A."/>
            <person name="Gloeckner G."/>
            <person name="Rajandream M.A."/>
            <person name="Sucgang R."/>
            <person name="Berriman M."/>
            <person name="Song J."/>
            <person name="Olsen R."/>
            <person name="Szafranski K."/>
            <person name="Xu Q."/>
            <person name="Tunggal B."/>
            <person name="Kummerfeld S."/>
            <person name="Madera M."/>
            <person name="Konfortov B.A."/>
            <person name="Rivero F."/>
            <person name="Bankier A.T."/>
            <person name="Lehmann R."/>
            <person name="Hamlin N."/>
            <person name="Davies R."/>
            <person name="Gaudet P."/>
            <person name="Fey P."/>
            <person name="Pilcher K."/>
            <person name="Chen G."/>
            <person name="Saunders D."/>
            <person name="Sodergren E.J."/>
            <person name="Davis P."/>
            <person name="Kerhornou A."/>
            <person name="Nie X."/>
            <person name="Hall N."/>
            <person name="Anjard C."/>
            <person name="Hemphill L."/>
            <person name="Bason N."/>
            <person name="Farbrother P."/>
            <person name="Desany B."/>
            <person name="Just E."/>
            <person name="Morio T."/>
            <person name="Rost R."/>
            <person name="Churcher C.M."/>
            <person name="Cooper J."/>
            <person name="Haydock S."/>
            <person name="van Driessche N."/>
            <person name="Cronin A."/>
            <person name="Goodhead I."/>
            <person name="Muzny D.M."/>
            <person name="Mourier T."/>
            <person name="Pain A."/>
            <person name="Lu M."/>
            <person name="Harper D."/>
            <person name="Lindsay R."/>
            <person name="Hauser H."/>
            <person name="James K.D."/>
            <person name="Quiles M."/>
            <person name="Madan Babu M."/>
            <person name="Saito T."/>
            <person name="Buchrieser C."/>
            <person name="Wardroper A."/>
            <person name="Felder M."/>
            <person name="Thangavelu M."/>
            <person name="Johnson D."/>
            <person name="Knights A."/>
            <person name="Loulseged H."/>
            <person name="Mungall K.L."/>
            <person name="Oliver K."/>
            <person name="Price C."/>
            <person name="Quail M.A."/>
            <person name="Urushihara H."/>
            <person name="Hernandez J."/>
            <person name="Rabbinowitsch E."/>
            <person name="Steffen D."/>
            <person name="Sanders M."/>
            <person name="Ma J."/>
            <person name="Kohara Y."/>
            <person name="Sharp S."/>
            <person name="Simmonds M.N."/>
            <person name="Spiegler S."/>
            <person name="Tivey A."/>
            <person name="Sugano S."/>
            <person name="White B."/>
            <person name="Walker D."/>
            <person name="Woodward J.R."/>
            <person name="Winckler T."/>
            <person name="Tanaka Y."/>
            <person name="Shaulsky G."/>
            <person name="Schleicher M."/>
            <person name="Weinstock G.M."/>
            <person name="Rosenthal A."/>
            <person name="Cox E.C."/>
            <person name="Chisholm R.L."/>
            <person name="Gibbs R.A."/>
            <person name="Loomis W.F."/>
            <person name="Platzer M."/>
            <person name="Kay R.R."/>
            <person name="Williams J.G."/>
            <person name="Dear P.H."/>
            <person name="Noegel A.A."/>
            <person name="Barrell B.G."/>
            <person name="Kuspa A."/>
        </authorList>
    </citation>
    <scope>NUCLEOTIDE SEQUENCE [LARGE SCALE GENOMIC DNA]</scope>
    <source>
        <strain>AX4</strain>
    </source>
</reference>
<reference key="3">
    <citation type="journal article" date="2005" name="Microbiology">
        <title>Temperature adaptation in Dictyostelium: role of Delta5 fatty acid desaturase.</title>
        <authorList>
            <person name="Saito T."/>
            <person name="Kato A."/>
            <person name="Ochiai H."/>
            <person name="Morita N."/>
        </authorList>
    </citation>
    <scope>DISRUPTION PHENOTYPE</scope>
    <source>
        <strain>AX2</strain>
    </source>
</reference>
<reference key="4">
    <citation type="journal article" date="2007" name="Phytochemistry">
        <title>Isolation and characterization of genes from the marine microalga Pavlova salina encoding three front-end desaturases involved in docosahexaenoic acid biosynthesis.</title>
        <authorList>
            <person name="Zhou X.R."/>
            <person name="Robert S.S."/>
            <person name="Petrie J.R."/>
            <person name="Frampton D.M."/>
            <person name="Mansour M.P."/>
            <person name="Blackburn S.I."/>
            <person name="Nichols P.D."/>
            <person name="Green A.G."/>
            <person name="Singh S.P."/>
        </authorList>
    </citation>
    <scope>IDENTIFICATION</scope>
</reference>
<sequence>MMETNNENKEKLKLYTWDEVSKHNQKNDLWIIVDGKVYNITKWVPLHPGGEDILLLSAGRDATNLFESYHPMTDKHYSLIKQYEIGYISSYEHPKYVEKSEFYSTLKQRVRKHFQTSSQDPKVSVGVFTRMVLIYLFLFVTYYLSQFSTDRFWLNCIFAVLYGVANSLFGLHTMHDACHTAITHNPMTWKILGATFDLFAGASFYAWCHQHVIGHHLYTNVRNADPDLGQGEIDFRVVTPYQARSWYHKYQHIYAPILYGVYALKYRIQDHEIFTKKSNGAIRYSPISTIDTAIFILGKLVFIISRFILPLIYNHSFSHLICFFLISELVLGWYLAISFQVSHVVEDLQFMATPEIFDGADHPLPTTFNQDWAILQVKTTQDYAQDSVLSTFFSGGLNLQVIHHCFPTIAQDYYPQIVPILKEVCKEYNVTYHYKPTFTEAIKSHINYLYKMGNDPDYVRKPVNKND</sequence>
<proteinExistence type="evidence at protein level"/>
<evidence type="ECO:0000250" key="1">
    <source>
        <dbReference type="UniProtKB" id="O00767"/>
    </source>
</evidence>
<evidence type="ECO:0000255" key="2"/>
<evidence type="ECO:0000255" key="3">
    <source>
        <dbReference type="PROSITE-ProRule" id="PRU00279"/>
    </source>
</evidence>
<evidence type="ECO:0000269" key="4">
    <source>
    </source>
</evidence>
<evidence type="ECO:0000269" key="5">
    <source>
    </source>
</evidence>
<evidence type="ECO:0000303" key="6">
    <source>
    </source>
</evidence>
<evidence type="ECO:0000305" key="7"/>
<dbReference type="EC" id="1.14.19.30" evidence="7"/>
<dbReference type="EMBL" id="AB022097">
    <property type="protein sequence ID" value="BAA37090.1"/>
    <property type="molecule type" value="mRNA"/>
</dbReference>
<dbReference type="EMBL" id="AAFI02000045">
    <property type="protein sequence ID" value="EAL66353.1"/>
    <property type="molecule type" value="Genomic_DNA"/>
</dbReference>
<dbReference type="RefSeq" id="XP_640331.1">
    <property type="nucleotide sequence ID" value="XM_635239.1"/>
</dbReference>
<dbReference type="SMR" id="O96099"/>
<dbReference type="FunCoup" id="O96099">
    <property type="interactions" value="80"/>
</dbReference>
<dbReference type="STRING" id="44689.O96099"/>
<dbReference type="PaxDb" id="44689-DDB0214992"/>
<dbReference type="EnsemblProtists" id="EAL66353">
    <property type="protein sequence ID" value="EAL66353"/>
    <property type="gene ID" value="DDB_G0282147"/>
</dbReference>
<dbReference type="GeneID" id="8623432"/>
<dbReference type="KEGG" id="ddi:DDB_G0282147"/>
<dbReference type="dictyBase" id="DDB_G0282147">
    <property type="gene designation" value="fadB"/>
</dbReference>
<dbReference type="VEuPathDB" id="AmoebaDB:DDB_G0282147"/>
<dbReference type="eggNOG" id="KOG4232">
    <property type="taxonomic scope" value="Eukaryota"/>
</dbReference>
<dbReference type="HOGENOM" id="CLU_030320_1_0_1"/>
<dbReference type="InParanoid" id="O96099"/>
<dbReference type="OMA" id="SFMAFYW"/>
<dbReference type="PhylomeDB" id="O96099"/>
<dbReference type="PRO" id="PR:O96099"/>
<dbReference type="Proteomes" id="UP000002195">
    <property type="component" value="Chromosome 3"/>
</dbReference>
<dbReference type="GO" id="GO:0005886">
    <property type="term" value="C:plasma membrane"/>
    <property type="evidence" value="ECO:0000305"/>
    <property type="project" value="dictyBase"/>
</dbReference>
<dbReference type="GO" id="GO:0102866">
    <property type="term" value="F:acyl-lipid (8-3)-desaturase activity"/>
    <property type="evidence" value="ECO:0007669"/>
    <property type="project" value="UniProtKB-EC"/>
</dbReference>
<dbReference type="GO" id="GO:0046872">
    <property type="term" value="F:metal ion binding"/>
    <property type="evidence" value="ECO:0007669"/>
    <property type="project" value="UniProtKB-KW"/>
</dbReference>
<dbReference type="GO" id="GO:0016491">
    <property type="term" value="F:oxidoreductase activity"/>
    <property type="evidence" value="ECO:0000314"/>
    <property type="project" value="dictyBase"/>
</dbReference>
<dbReference type="GO" id="GO:0016717">
    <property type="term" value="F:oxidoreductase activity, acting on paired donors, with oxidation of a pair of donors resulting in the reduction of molecular oxygen to two molecules of water"/>
    <property type="evidence" value="ECO:0000318"/>
    <property type="project" value="GO_Central"/>
</dbReference>
<dbReference type="GO" id="GO:0006629">
    <property type="term" value="P:lipid metabolic process"/>
    <property type="evidence" value="ECO:0000318"/>
    <property type="project" value="GO_Central"/>
</dbReference>
<dbReference type="GO" id="GO:0006636">
    <property type="term" value="P:unsaturated fatty acid biosynthetic process"/>
    <property type="evidence" value="ECO:0000314"/>
    <property type="project" value="dictyBase"/>
</dbReference>
<dbReference type="CDD" id="cd03506">
    <property type="entry name" value="Delta6-FADS-like"/>
    <property type="match status" value="1"/>
</dbReference>
<dbReference type="FunFam" id="3.10.120.10:FF:000021">
    <property type="entry name" value="Delta(8)-fatty-acid desaturase 2"/>
    <property type="match status" value="1"/>
</dbReference>
<dbReference type="Gene3D" id="3.10.120.10">
    <property type="entry name" value="Cytochrome b5-like heme/steroid binding domain"/>
    <property type="match status" value="1"/>
</dbReference>
<dbReference type="InterPro" id="IPR001199">
    <property type="entry name" value="Cyt_B5-like_heme/steroid-bd"/>
</dbReference>
<dbReference type="InterPro" id="IPR036400">
    <property type="entry name" value="Cyt_B5-like_heme/steroid_sf"/>
</dbReference>
<dbReference type="InterPro" id="IPR005804">
    <property type="entry name" value="FA_desaturase_dom"/>
</dbReference>
<dbReference type="InterPro" id="IPR012171">
    <property type="entry name" value="Fatty_acid_desaturase"/>
</dbReference>
<dbReference type="PANTHER" id="PTHR19353:SF80">
    <property type="entry name" value="ACYL-LIPID (8-3)-DESATURASE B"/>
    <property type="match status" value="1"/>
</dbReference>
<dbReference type="PANTHER" id="PTHR19353">
    <property type="entry name" value="FATTY ACID DESATURASE 2"/>
    <property type="match status" value="1"/>
</dbReference>
<dbReference type="Pfam" id="PF00173">
    <property type="entry name" value="Cyt-b5"/>
    <property type="match status" value="1"/>
</dbReference>
<dbReference type="Pfam" id="PF00487">
    <property type="entry name" value="FA_desaturase"/>
    <property type="match status" value="1"/>
</dbReference>
<dbReference type="PIRSF" id="PIRSF015921">
    <property type="entry name" value="FA_sphinglp_des"/>
    <property type="match status" value="1"/>
</dbReference>
<dbReference type="PRINTS" id="PR00363">
    <property type="entry name" value="CYTOCHROMEB5"/>
</dbReference>
<dbReference type="SMART" id="SM01117">
    <property type="entry name" value="Cyt-b5"/>
    <property type="match status" value="1"/>
</dbReference>
<dbReference type="SUPFAM" id="SSF55856">
    <property type="entry name" value="Cytochrome b5-like heme/steroid binding domain"/>
    <property type="match status" value="1"/>
</dbReference>
<dbReference type="PROSITE" id="PS50255">
    <property type="entry name" value="CYTOCHROME_B5_2"/>
    <property type="match status" value="1"/>
</dbReference>
<name>FAD5B_DICDI</name>